<dbReference type="EC" id="7.1.1.-" evidence="1"/>
<dbReference type="EMBL" id="CP000142">
    <property type="protein sequence ID" value="ABA87477.1"/>
    <property type="molecule type" value="Genomic_DNA"/>
</dbReference>
<dbReference type="RefSeq" id="WP_011339877.1">
    <property type="nucleotide sequence ID" value="NC_007498.2"/>
</dbReference>
<dbReference type="SMR" id="Q3A815"/>
<dbReference type="STRING" id="338963.Pcar_0216"/>
<dbReference type="KEGG" id="pca:Pcar_0216"/>
<dbReference type="eggNOG" id="COG1007">
    <property type="taxonomic scope" value="Bacteria"/>
</dbReference>
<dbReference type="HOGENOM" id="CLU_007100_1_3_7"/>
<dbReference type="OrthoDB" id="9805769at2"/>
<dbReference type="Proteomes" id="UP000002534">
    <property type="component" value="Chromosome"/>
</dbReference>
<dbReference type="GO" id="GO:0005886">
    <property type="term" value="C:plasma membrane"/>
    <property type="evidence" value="ECO:0007669"/>
    <property type="project" value="UniProtKB-SubCell"/>
</dbReference>
<dbReference type="GO" id="GO:0008137">
    <property type="term" value="F:NADH dehydrogenase (ubiquinone) activity"/>
    <property type="evidence" value="ECO:0007669"/>
    <property type="project" value="InterPro"/>
</dbReference>
<dbReference type="GO" id="GO:0050136">
    <property type="term" value="F:NADH:ubiquinone reductase (non-electrogenic) activity"/>
    <property type="evidence" value="ECO:0007669"/>
    <property type="project" value="UniProtKB-UniRule"/>
</dbReference>
<dbReference type="GO" id="GO:0048038">
    <property type="term" value="F:quinone binding"/>
    <property type="evidence" value="ECO:0007669"/>
    <property type="project" value="UniProtKB-KW"/>
</dbReference>
<dbReference type="GO" id="GO:0042773">
    <property type="term" value="P:ATP synthesis coupled electron transport"/>
    <property type="evidence" value="ECO:0007669"/>
    <property type="project" value="InterPro"/>
</dbReference>
<dbReference type="HAMAP" id="MF_00445">
    <property type="entry name" value="NDH1_NuoN_1"/>
    <property type="match status" value="1"/>
</dbReference>
<dbReference type="InterPro" id="IPR010096">
    <property type="entry name" value="NADH-Q_OxRdtase_suN/2"/>
</dbReference>
<dbReference type="InterPro" id="IPR001750">
    <property type="entry name" value="ND/Mrp_TM"/>
</dbReference>
<dbReference type="PANTHER" id="PTHR22773">
    <property type="entry name" value="NADH DEHYDROGENASE"/>
    <property type="match status" value="1"/>
</dbReference>
<dbReference type="Pfam" id="PF00361">
    <property type="entry name" value="Proton_antipo_M"/>
    <property type="match status" value="1"/>
</dbReference>
<comment type="function">
    <text evidence="1">NDH-1 shuttles electrons from NADH, via FMN and iron-sulfur (Fe-S) centers, to quinones in the respiratory chain. The immediate electron acceptor for the enzyme in this species is believed to be ubiquinone. Couples the redox reaction to proton translocation (for every two electrons transferred, four hydrogen ions are translocated across the cytoplasmic membrane), and thus conserves the redox energy in a proton gradient.</text>
</comment>
<comment type="catalytic activity">
    <reaction evidence="1">
        <text>a quinone + NADH + 5 H(+)(in) = a quinol + NAD(+) + 4 H(+)(out)</text>
        <dbReference type="Rhea" id="RHEA:57888"/>
        <dbReference type="ChEBI" id="CHEBI:15378"/>
        <dbReference type="ChEBI" id="CHEBI:24646"/>
        <dbReference type="ChEBI" id="CHEBI:57540"/>
        <dbReference type="ChEBI" id="CHEBI:57945"/>
        <dbReference type="ChEBI" id="CHEBI:132124"/>
    </reaction>
</comment>
<comment type="subunit">
    <text evidence="1">NDH-1 is composed of 14 different subunits. Subunits NuoA, H, J, K, L, M, N constitute the membrane sector of the complex.</text>
</comment>
<comment type="subcellular location">
    <subcellularLocation>
        <location evidence="1">Cell inner membrane</location>
        <topology evidence="1">Multi-pass membrane protein</topology>
    </subcellularLocation>
</comment>
<comment type="similarity">
    <text evidence="1">Belongs to the complex I subunit 2 family.</text>
</comment>
<sequence>MTWNMLLALLPLLVLFGGSITVLFLSERRALLSAAMCAVVAAGFAWWPASLEAAGTPLVASNLFARGCLTLWALLGAATCLLSDRYRGSRKLAAREYAALTLFAVLGMAILSASTSLVSLFLGLESMTLAFYVLIAVDRENPTGAEAGLKYLLPGFLASALLAFGIALVYAATGTFELSAAISLSMAGAPMPSIALLGWTLIMAAAAFKASLAPFHLWTPDVYQGASAPIAGFLASGSKGAVFAVLLGSAPLALIVPLRPLLGGLAALSMIWGTLAALRQTNLKRMLAYSSVVHMGYLVLAVLSNRSAGMEAGLFYLLTYSAATVGTFGLLASMVDSGGEPQDYAALEGLAGRSPWRAVLLTGLLLSLAGFPPLAGFMGKFVLFGAALQSGYVGLVVLALLSSLISCYYYLRPVLYLFRVRQGAPTVPAFNNCERLIFVLCAGVTLVAGLYPGPFFRWFGAMLP</sequence>
<gene>
    <name evidence="1" type="primary">nuoN</name>
    <name type="ordered locus">Pcar_0216</name>
</gene>
<organism>
    <name type="scientific">Syntrophotalea carbinolica (strain DSM 2380 / NBRC 103641 / GraBd1)</name>
    <name type="common">Pelobacter carbinolicus</name>
    <dbReference type="NCBI Taxonomy" id="338963"/>
    <lineage>
        <taxon>Bacteria</taxon>
        <taxon>Pseudomonadati</taxon>
        <taxon>Thermodesulfobacteriota</taxon>
        <taxon>Desulfuromonadia</taxon>
        <taxon>Desulfuromonadales</taxon>
        <taxon>Syntrophotaleaceae</taxon>
        <taxon>Syntrophotalea</taxon>
    </lineage>
</organism>
<reference key="1">
    <citation type="submission" date="2005-10" db="EMBL/GenBank/DDBJ databases">
        <title>Complete sequence of Pelobacter carbinolicus DSM 2380.</title>
        <authorList>
            <person name="Copeland A."/>
            <person name="Lucas S."/>
            <person name="Lapidus A."/>
            <person name="Barry K."/>
            <person name="Detter J.C."/>
            <person name="Glavina T."/>
            <person name="Hammon N."/>
            <person name="Israni S."/>
            <person name="Pitluck S."/>
            <person name="Chertkov O."/>
            <person name="Schmutz J."/>
            <person name="Larimer F."/>
            <person name="Land M."/>
            <person name="Kyrpides N."/>
            <person name="Ivanova N."/>
            <person name="Richardson P."/>
        </authorList>
    </citation>
    <scope>NUCLEOTIDE SEQUENCE [LARGE SCALE GENOMIC DNA]</scope>
    <source>
        <strain>DSM 2380 / NBRC 103641 / GraBd1</strain>
    </source>
</reference>
<evidence type="ECO:0000255" key="1">
    <source>
        <dbReference type="HAMAP-Rule" id="MF_00445"/>
    </source>
</evidence>
<accession>Q3A815</accession>
<protein>
    <recommendedName>
        <fullName evidence="1">NADH-quinone oxidoreductase subunit N</fullName>
        <ecNumber evidence="1">7.1.1.-</ecNumber>
    </recommendedName>
    <alternativeName>
        <fullName evidence="1">NADH dehydrogenase I subunit N</fullName>
    </alternativeName>
    <alternativeName>
        <fullName evidence="1">NDH-1 subunit N</fullName>
    </alternativeName>
</protein>
<proteinExistence type="inferred from homology"/>
<name>NUON_SYNC1</name>
<feature type="chain" id="PRO_0000391200" description="NADH-quinone oxidoreductase subunit N">
    <location>
        <begin position="1"/>
        <end position="464"/>
    </location>
</feature>
<feature type="transmembrane region" description="Helical" evidence="1">
    <location>
        <begin position="5"/>
        <end position="25"/>
    </location>
</feature>
<feature type="transmembrane region" description="Helical" evidence="1">
    <location>
        <begin position="31"/>
        <end position="51"/>
    </location>
</feature>
<feature type="transmembrane region" description="Helical" evidence="1">
    <location>
        <begin position="63"/>
        <end position="83"/>
    </location>
</feature>
<feature type="transmembrane region" description="Helical" evidence="1">
    <location>
        <begin position="96"/>
        <end position="116"/>
    </location>
</feature>
<feature type="transmembrane region" description="Helical" evidence="1">
    <location>
        <begin position="117"/>
        <end position="137"/>
    </location>
</feature>
<feature type="transmembrane region" description="Helical" evidence="1">
    <location>
        <begin position="152"/>
        <end position="172"/>
    </location>
</feature>
<feature type="transmembrane region" description="Helical" evidence="1">
    <location>
        <begin position="188"/>
        <end position="208"/>
    </location>
</feature>
<feature type="transmembrane region" description="Helical" evidence="1">
    <location>
        <begin position="242"/>
        <end position="262"/>
    </location>
</feature>
<feature type="transmembrane region" description="Helical" evidence="1">
    <location>
        <begin position="286"/>
        <end position="303"/>
    </location>
</feature>
<feature type="transmembrane region" description="Helical" evidence="1">
    <location>
        <begin position="312"/>
        <end position="332"/>
    </location>
</feature>
<feature type="transmembrane region" description="Helical" evidence="1">
    <location>
        <begin position="358"/>
        <end position="378"/>
    </location>
</feature>
<feature type="transmembrane region" description="Helical" evidence="1">
    <location>
        <begin position="393"/>
        <end position="415"/>
    </location>
</feature>
<feature type="transmembrane region" description="Helical" evidence="1">
    <location>
        <begin position="436"/>
        <end position="456"/>
    </location>
</feature>
<keyword id="KW-0997">Cell inner membrane</keyword>
<keyword id="KW-1003">Cell membrane</keyword>
<keyword id="KW-0472">Membrane</keyword>
<keyword id="KW-0520">NAD</keyword>
<keyword id="KW-0874">Quinone</keyword>
<keyword id="KW-1185">Reference proteome</keyword>
<keyword id="KW-1278">Translocase</keyword>
<keyword id="KW-0812">Transmembrane</keyword>
<keyword id="KW-1133">Transmembrane helix</keyword>
<keyword id="KW-0813">Transport</keyword>
<keyword id="KW-0830">Ubiquinone</keyword>